<keyword id="KW-0963">Cytoplasm</keyword>
<keyword id="KW-0342">GTP-binding</keyword>
<keyword id="KW-0396">Initiation factor</keyword>
<keyword id="KW-0547">Nucleotide-binding</keyword>
<keyword id="KW-0648">Protein biosynthesis</keyword>
<feature type="chain" id="PRO_0000137248" description="Translation initiation factor IF-2">
    <location>
        <begin position="1"/>
        <end position="705"/>
    </location>
</feature>
<feature type="domain" description="tr-type G">
    <location>
        <begin position="207"/>
        <end position="376"/>
    </location>
</feature>
<feature type="region of interest" description="Disordered" evidence="3">
    <location>
        <begin position="40"/>
        <end position="124"/>
    </location>
</feature>
<feature type="region of interest" description="G1" evidence="1">
    <location>
        <begin position="216"/>
        <end position="223"/>
    </location>
</feature>
<feature type="region of interest" description="G2" evidence="1">
    <location>
        <begin position="241"/>
        <end position="245"/>
    </location>
</feature>
<feature type="region of interest" description="G3" evidence="1">
    <location>
        <begin position="262"/>
        <end position="265"/>
    </location>
</feature>
<feature type="region of interest" description="G4" evidence="1">
    <location>
        <begin position="316"/>
        <end position="319"/>
    </location>
</feature>
<feature type="region of interest" description="G5" evidence="1">
    <location>
        <begin position="352"/>
        <end position="354"/>
    </location>
</feature>
<feature type="compositionally biased region" description="Basic and acidic residues" evidence="3">
    <location>
        <begin position="41"/>
        <end position="58"/>
    </location>
</feature>
<feature type="compositionally biased region" description="Low complexity" evidence="3">
    <location>
        <begin position="59"/>
        <end position="77"/>
    </location>
</feature>
<feature type="compositionally biased region" description="Basic residues" evidence="3">
    <location>
        <begin position="94"/>
        <end position="108"/>
    </location>
</feature>
<feature type="binding site" evidence="2">
    <location>
        <begin position="216"/>
        <end position="223"/>
    </location>
    <ligand>
        <name>GTP</name>
        <dbReference type="ChEBI" id="CHEBI:37565"/>
    </ligand>
</feature>
<feature type="binding site" evidence="2">
    <location>
        <begin position="262"/>
        <end position="266"/>
    </location>
    <ligand>
        <name>GTP</name>
        <dbReference type="ChEBI" id="CHEBI:37565"/>
    </ligand>
</feature>
<feature type="binding site" evidence="2">
    <location>
        <begin position="316"/>
        <end position="319"/>
    </location>
    <ligand>
        <name>GTP</name>
        <dbReference type="ChEBI" id="CHEBI:37565"/>
    </ligand>
</feature>
<accession>Q5HGG2</accession>
<evidence type="ECO:0000250" key="1"/>
<evidence type="ECO:0000255" key="2">
    <source>
        <dbReference type="HAMAP-Rule" id="MF_00100"/>
    </source>
</evidence>
<evidence type="ECO:0000256" key="3">
    <source>
        <dbReference type="SAM" id="MobiDB-lite"/>
    </source>
</evidence>
<protein>
    <recommendedName>
        <fullName evidence="2">Translation initiation factor IF-2</fullName>
    </recommendedName>
</protein>
<name>IF2_STAAC</name>
<dbReference type="EMBL" id="CP000046">
    <property type="protein sequence ID" value="AAW38119.1"/>
    <property type="molecule type" value="Genomic_DNA"/>
</dbReference>
<dbReference type="RefSeq" id="WP_000043634.1">
    <property type="nucleotide sequence ID" value="NZ_JBGOFO010000002.1"/>
</dbReference>
<dbReference type="SMR" id="Q5HGG2"/>
<dbReference type="KEGG" id="sac:SACOL1288"/>
<dbReference type="HOGENOM" id="CLU_006301_5_1_9"/>
<dbReference type="Proteomes" id="UP000000530">
    <property type="component" value="Chromosome"/>
</dbReference>
<dbReference type="GO" id="GO:0005829">
    <property type="term" value="C:cytosol"/>
    <property type="evidence" value="ECO:0007669"/>
    <property type="project" value="TreeGrafter"/>
</dbReference>
<dbReference type="GO" id="GO:0005525">
    <property type="term" value="F:GTP binding"/>
    <property type="evidence" value="ECO:0007669"/>
    <property type="project" value="UniProtKB-KW"/>
</dbReference>
<dbReference type="GO" id="GO:0003924">
    <property type="term" value="F:GTPase activity"/>
    <property type="evidence" value="ECO:0007669"/>
    <property type="project" value="UniProtKB-UniRule"/>
</dbReference>
<dbReference type="GO" id="GO:0003743">
    <property type="term" value="F:translation initiation factor activity"/>
    <property type="evidence" value="ECO:0007669"/>
    <property type="project" value="UniProtKB-UniRule"/>
</dbReference>
<dbReference type="CDD" id="cd01887">
    <property type="entry name" value="IF2_eIF5B"/>
    <property type="match status" value="1"/>
</dbReference>
<dbReference type="CDD" id="cd03702">
    <property type="entry name" value="IF2_mtIF2_II"/>
    <property type="match status" value="1"/>
</dbReference>
<dbReference type="CDD" id="cd03692">
    <property type="entry name" value="mtIF2_IVc"/>
    <property type="match status" value="1"/>
</dbReference>
<dbReference type="FunFam" id="1.10.10.2480:FF:000002">
    <property type="entry name" value="Translation initiation factor IF-2"/>
    <property type="match status" value="1"/>
</dbReference>
<dbReference type="FunFam" id="2.40.30.10:FF:000007">
    <property type="entry name" value="Translation initiation factor IF-2"/>
    <property type="match status" value="1"/>
</dbReference>
<dbReference type="FunFam" id="2.40.30.10:FF:000008">
    <property type="entry name" value="Translation initiation factor IF-2"/>
    <property type="match status" value="1"/>
</dbReference>
<dbReference type="FunFam" id="3.40.50.10050:FF:000001">
    <property type="entry name" value="Translation initiation factor IF-2"/>
    <property type="match status" value="1"/>
</dbReference>
<dbReference type="FunFam" id="3.40.50.300:FF:000019">
    <property type="entry name" value="Translation initiation factor IF-2"/>
    <property type="match status" value="1"/>
</dbReference>
<dbReference type="Gene3D" id="1.10.10.2480">
    <property type="match status" value="1"/>
</dbReference>
<dbReference type="Gene3D" id="3.40.50.300">
    <property type="entry name" value="P-loop containing nucleotide triphosphate hydrolases"/>
    <property type="match status" value="1"/>
</dbReference>
<dbReference type="Gene3D" id="2.40.30.10">
    <property type="entry name" value="Translation factors"/>
    <property type="match status" value="2"/>
</dbReference>
<dbReference type="Gene3D" id="3.40.50.10050">
    <property type="entry name" value="Translation initiation factor IF- 2, domain 3"/>
    <property type="match status" value="1"/>
</dbReference>
<dbReference type="HAMAP" id="MF_00100_B">
    <property type="entry name" value="IF_2_B"/>
    <property type="match status" value="1"/>
</dbReference>
<dbReference type="InterPro" id="IPR053905">
    <property type="entry name" value="EF-G-like_DII"/>
</dbReference>
<dbReference type="InterPro" id="IPR044145">
    <property type="entry name" value="IF2_II"/>
</dbReference>
<dbReference type="InterPro" id="IPR006847">
    <property type="entry name" value="IF2_N"/>
</dbReference>
<dbReference type="InterPro" id="IPR027417">
    <property type="entry name" value="P-loop_NTPase"/>
</dbReference>
<dbReference type="InterPro" id="IPR005225">
    <property type="entry name" value="Small_GTP-bd"/>
</dbReference>
<dbReference type="InterPro" id="IPR000795">
    <property type="entry name" value="T_Tr_GTP-bd_dom"/>
</dbReference>
<dbReference type="InterPro" id="IPR000178">
    <property type="entry name" value="TF_IF2_bacterial-like"/>
</dbReference>
<dbReference type="InterPro" id="IPR015760">
    <property type="entry name" value="TIF_IF2"/>
</dbReference>
<dbReference type="InterPro" id="IPR023115">
    <property type="entry name" value="TIF_IF2_dom3"/>
</dbReference>
<dbReference type="InterPro" id="IPR036925">
    <property type="entry name" value="TIF_IF2_dom3_sf"/>
</dbReference>
<dbReference type="InterPro" id="IPR009000">
    <property type="entry name" value="Transl_B-barrel_sf"/>
</dbReference>
<dbReference type="NCBIfam" id="TIGR00487">
    <property type="entry name" value="IF-2"/>
    <property type="match status" value="1"/>
</dbReference>
<dbReference type="NCBIfam" id="TIGR00231">
    <property type="entry name" value="small_GTP"/>
    <property type="match status" value="1"/>
</dbReference>
<dbReference type="PANTHER" id="PTHR43381:SF5">
    <property type="entry name" value="TR-TYPE G DOMAIN-CONTAINING PROTEIN"/>
    <property type="match status" value="1"/>
</dbReference>
<dbReference type="PANTHER" id="PTHR43381">
    <property type="entry name" value="TRANSLATION INITIATION FACTOR IF-2-RELATED"/>
    <property type="match status" value="1"/>
</dbReference>
<dbReference type="Pfam" id="PF22042">
    <property type="entry name" value="EF-G_D2"/>
    <property type="match status" value="1"/>
</dbReference>
<dbReference type="Pfam" id="PF00009">
    <property type="entry name" value="GTP_EFTU"/>
    <property type="match status" value="1"/>
</dbReference>
<dbReference type="Pfam" id="PF11987">
    <property type="entry name" value="IF-2"/>
    <property type="match status" value="1"/>
</dbReference>
<dbReference type="Pfam" id="PF04760">
    <property type="entry name" value="IF2_N"/>
    <property type="match status" value="2"/>
</dbReference>
<dbReference type="SUPFAM" id="SSF52156">
    <property type="entry name" value="Initiation factor IF2/eIF5b, domain 3"/>
    <property type="match status" value="1"/>
</dbReference>
<dbReference type="SUPFAM" id="SSF52540">
    <property type="entry name" value="P-loop containing nucleoside triphosphate hydrolases"/>
    <property type="match status" value="1"/>
</dbReference>
<dbReference type="SUPFAM" id="SSF50447">
    <property type="entry name" value="Translation proteins"/>
    <property type="match status" value="2"/>
</dbReference>
<dbReference type="PROSITE" id="PS51722">
    <property type="entry name" value="G_TR_2"/>
    <property type="match status" value="1"/>
</dbReference>
<dbReference type="PROSITE" id="PS01176">
    <property type="entry name" value="IF2"/>
    <property type="match status" value="1"/>
</dbReference>
<proteinExistence type="inferred from homology"/>
<gene>
    <name evidence="2" type="primary">infB</name>
    <name type="ordered locus">SACOL1288</name>
</gene>
<comment type="function">
    <text evidence="2">One of the essential components for the initiation of protein synthesis. Protects formylmethionyl-tRNA from spontaneous hydrolysis and promotes its binding to the 30S ribosomal subunits. Also involved in the hydrolysis of GTP during the formation of the 70S ribosomal complex.</text>
</comment>
<comment type="subcellular location">
    <subcellularLocation>
        <location evidence="2">Cytoplasm</location>
    </subcellularLocation>
</comment>
<comment type="similarity">
    <text evidence="2">Belongs to the TRAFAC class translation factor GTPase superfamily. Classic translation factor GTPase family. IF-2 subfamily.</text>
</comment>
<organism>
    <name type="scientific">Staphylococcus aureus (strain COL)</name>
    <dbReference type="NCBI Taxonomy" id="93062"/>
    <lineage>
        <taxon>Bacteria</taxon>
        <taxon>Bacillati</taxon>
        <taxon>Bacillota</taxon>
        <taxon>Bacilli</taxon>
        <taxon>Bacillales</taxon>
        <taxon>Staphylococcaceae</taxon>
        <taxon>Staphylococcus</taxon>
    </lineage>
</organism>
<sequence length="705" mass="77871">MSKQRIYEYAKELNLKSKEIIDELKSMNIEVSNHMQALEDDQIKALDKKFKKEQKNDNKQSTQNNHQKSNNQNQNKGQQKDNKKNQQQNNKGNKGNKKNNRNNKKNNKNNKPQNQPAAPKEIPSKVTYQEGITVGEFADKLNVESSEIIKKLFLLGIVANINQSLNQETIELIADDYGVEVEEEVVINEEDLSIYFEDEKDDPEAIERPAVVTIMGHVDHGKTTLLDSIRHTKVTAGEAGGITQHIGAYQIENDGKKITFLDTPGHAAFTTMRARGAQVTDITILVVAADDGVMPQTIEAINHAKEAEVPIIVAVNKIDKPTSNPDRVMQELTEYGLIPEDWGGETIFVPLSALSGDGIDDLLEMIGLVAEVQELKANPKNRAVGTVIEAELDKSRGPSASLLVQNGTLNVGDAIVVGNTYGRIRAMVNDLGQRIKTAGPSTPVEITGINDVPQAGDRFVVFSDEKQARRIGESRHEASIIQQRQESKNVSLDNLFEQMKQGEMKDLNVIIKGDVQGSVEALAASLMKIDVEGVNVRIIHTAVGAINESDVTLANASNGIIIGFNVRPDSGAKRAAEAENVDMRLHRVIYNVIEEIESAMKGLLDPEFEEQVIGQAEVRQTFKVSKVGTIAGCYVTEGKITRNAGVRIIRDGIVQYEGELDTLKRFKDDAKEVAKGYECGITIENYNDLKEGDVIEAFEMVEIKR</sequence>
<reference key="1">
    <citation type="journal article" date="2005" name="J. Bacteriol.">
        <title>Insights on evolution of virulence and resistance from the complete genome analysis of an early methicillin-resistant Staphylococcus aureus strain and a biofilm-producing methicillin-resistant Staphylococcus epidermidis strain.</title>
        <authorList>
            <person name="Gill S.R."/>
            <person name="Fouts D.E."/>
            <person name="Archer G.L."/>
            <person name="Mongodin E.F."/>
            <person name="DeBoy R.T."/>
            <person name="Ravel J."/>
            <person name="Paulsen I.T."/>
            <person name="Kolonay J.F."/>
            <person name="Brinkac L.M."/>
            <person name="Beanan M.J."/>
            <person name="Dodson R.J."/>
            <person name="Daugherty S.C."/>
            <person name="Madupu R."/>
            <person name="Angiuoli S.V."/>
            <person name="Durkin A.S."/>
            <person name="Haft D.H."/>
            <person name="Vamathevan J.J."/>
            <person name="Khouri H."/>
            <person name="Utterback T.R."/>
            <person name="Lee C."/>
            <person name="Dimitrov G."/>
            <person name="Jiang L."/>
            <person name="Qin H."/>
            <person name="Weidman J."/>
            <person name="Tran K."/>
            <person name="Kang K.H."/>
            <person name="Hance I.R."/>
            <person name="Nelson K.E."/>
            <person name="Fraser C.M."/>
        </authorList>
    </citation>
    <scope>NUCLEOTIDE SEQUENCE [LARGE SCALE GENOMIC DNA]</scope>
    <source>
        <strain>COL</strain>
    </source>
</reference>